<evidence type="ECO:0000250" key="1">
    <source>
        <dbReference type="UniProtKB" id="P84276"/>
    </source>
</evidence>
<evidence type="ECO:0000255" key="2"/>
<evidence type="ECO:0000269" key="3">
    <source>
    </source>
</evidence>
<evidence type="ECO:0000303" key="4">
    <source>
    </source>
</evidence>
<evidence type="ECO:0000305" key="5"/>
<evidence type="ECO:0000305" key="6">
    <source>
    </source>
</evidence>
<evidence type="ECO:0000312" key="7">
    <source>
        <dbReference type="EMBL" id="ADM34264.1"/>
    </source>
</evidence>
<feature type="signal peptide" evidence="2">
    <location>
        <begin position="1"/>
        <end position="22"/>
    </location>
</feature>
<feature type="propeptide" id="PRO_0000439738" description="Removed in mature form" evidence="6">
    <location>
        <begin position="23"/>
        <end position="39"/>
    </location>
</feature>
<feature type="peptide" id="PRO_0000439739" description="Palustrin-2CG1" evidence="3">
    <location>
        <begin position="42"/>
        <end position="72"/>
    </location>
</feature>
<feature type="disulfide bond" evidence="1">
    <location>
        <begin position="64"/>
        <end position="70"/>
    </location>
</feature>
<proteinExistence type="evidence at protein level"/>
<organism evidence="4">
    <name type="scientific">Amolops chunganensis</name>
    <name type="common">Chungan torrent frog</name>
    <name type="synonym">Hylorana chunganensis</name>
    <dbReference type="NCBI Taxonomy" id="325556"/>
    <lineage>
        <taxon>Eukaryota</taxon>
        <taxon>Metazoa</taxon>
        <taxon>Chordata</taxon>
        <taxon>Craniata</taxon>
        <taxon>Vertebrata</taxon>
        <taxon>Euteleostomi</taxon>
        <taxon>Amphibia</taxon>
        <taxon>Batrachia</taxon>
        <taxon>Anura</taxon>
        <taxon>Neobatrachia</taxon>
        <taxon>Ranoidea</taxon>
        <taxon>Ranidae</taxon>
        <taxon>Amolops</taxon>
    </lineage>
</organism>
<accession>E1B231</accession>
<dbReference type="EMBL" id="HQ128606">
    <property type="protein sequence ID" value="ADM34264.1"/>
    <property type="molecule type" value="mRNA"/>
</dbReference>
<dbReference type="SMR" id="E1B231"/>
<dbReference type="GO" id="GO:0005576">
    <property type="term" value="C:extracellular region"/>
    <property type="evidence" value="ECO:0007669"/>
    <property type="project" value="UniProtKB-SubCell"/>
</dbReference>
<dbReference type="GO" id="GO:0042742">
    <property type="term" value="P:defense response to bacterium"/>
    <property type="evidence" value="ECO:0007669"/>
    <property type="project" value="UniProtKB-KW"/>
</dbReference>
<dbReference type="GO" id="GO:0050832">
    <property type="term" value="P:defense response to fungus"/>
    <property type="evidence" value="ECO:0007669"/>
    <property type="project" value="UniProtKB-KW"/>
</dbReference>
<dbReference type="GO" id="GO:0031640">
    <property type="term" value="P:killing of cells of another organism"/>
    <property type="evidence" value="ECO:0007669"/>
    <property type="project" value="UniProtKB-KW"/>
</dbReference>
<dbReference type="InterPro" id="IPR004275">
    <property type="entry name" value="Frog_antimicrobial_propeptide"/>
</dbReference>
<dbReference type="Pfam" id="PF03032">
    <property type="entry name" value="FSAP_sig_propep"/>
    <property type="match status" value="1"/>
</dbReference>
<comment type="function">
    <text evidence="3">Antimicrobial peptide active against a variety of Gram-positive and some Gram-negative bacterial strains. Has antifungal activity against a slime mold isolate. Has hemolytic activity against human erythrocytes.</text>
</comment>
<comment type="subcellular location">
    <subcellularLocation>
        <location evidence="2 3">Secreted</location>
    </subcellularLocation>
</comment>
<comment type="tissue specificity">
    <text evidence="6">Expressed by the skin glands.</text>
</comment>
<comment type="mass spectrometry"/>
<comment type="similarity">
    <text evidence="5">Belongs to the frog skin active peptide (FSAP) family. Brevinin subfamily.</text>
</comment>
<protein>
    <recommendedName>
        <fullName evidence="4">Palustrin-2CG1</fullName>
    </recommendedName>
</protein>
<name>P2CG1_AMOCU</name>
<keyword id="KW-0878">Amphibian defense peptide</keyword>
<keyword id="KW-0044">Antibiotic</keyword>
<keyword id="KW-0929">Antimicrobial</keyword>
<keyword id="KW-0165">Cleavage on pair of basic residues</keyword>
<keyword id="KW-0204">Cytolysis</keyword>
<keyword id="KW-0903">Direct protein sequencing</keyword>
<keyword id="KW-1015">Disulfide bond</keyword>
<keyword id="KW-0295">Fungicide</keyword>
<keyword id="KW-0354">Hemolysis</keyword>
<keyword id="KW-0964">Secreted</keyword>
<keyword id="KW-0732">Signal</keyword>
<sequence>MFTMKKPLLLLFFLGTISLSLCQEERGADEDDGEMTEEVKRGLWNTIKEAGKKFAINVLDKIRCGIAGGCKT</sequence>
<reference evidence="7" key="1">
    <citation type="journal article" date="2012" name="Peptides">
        <title>Characterization of diverse antimicrobial peptides in skin secretions of Chungan torrent frog Amolops chunganensis.</title>
        <authorList>
            <person name="Yang X."/>
            <person name="Xia J."/>
            <person name="Yu Z."/>
            <person name="Hu Y."/>
            <person name="Li F."/>
            <person name="Meng H."/>
            <person name="Yang S."/>
            <person name="Liu J."/>
            <person name="Wang H."/>
        </authorList>
    </citation>
    <scope>NUCLEOTIDE SEQUENCE [MRNA]</scope>
    <scope>PROTEIN SEQUENCE OF 42-72</scope>
    <scope>FUNCTION</scope>
    <scope>SYNTHESIS</scope>
    <scope>SUBCELLULAR LOCATION</scope>
    <scope>MASS SPECTROMETRY</scope>
    <source>
        <tissue evidence="4">Skin secretion</tissue>
    </source>
</reference>